<feature type="chain" id="PRO_0000371644" description="Small ribosomal subunit protein uS2">
    <location>
        <begin position="1"/>
        <end position="300"/>
    </location>
</feature>
<feature type="region of interest" description="Disordered" evidence="2">
    <location>
        <begin position="278"/>
        <end position="300"/>
    </location>
</feature>
<keyword id="KW-0963">Cytoplasm</keyword>
<keyword id="KW-1185">Reference proteome</keyword>
<keyword id="KW-0687">Ribonucleoprotein</keyword>
<keyword id="KW-0689">Ribosomal protein</keyword>
<organism>
    <name type="scientific">Pyrenophora tritici-repentis (strain Pt-1C-BFP)</name>
    <name type="common">Wheat tan spot fungus</name>
    <name type="synonym">Drechslera tritici-repentis</name>
    <dbReference type="NCBI Taxonomy" id="426418"/>
    <lineage>
        <taxon>Eukaryota</taxon>
        <taxon>Fungi</taxon>
        <taxon>Dikarya</taxon>
        <taxon>Ascomycota</taxon>
        <taxon>Pezizomycotina</taxon>
        <taxon>Dothideomycetes</taxon>
        <taxon>Pleosporomycetidae</taxon>
        <taxon>Pleosporales</taxon>
        <taxon>Pleosporineae</taxon>
        <taxon>Pleosporaceae</taxon>
        <taxon>Pyrenophora</taxon>
    </lineage>
</organism>
<protein>
    <recommendedName>
        <fullName evidence="1">Small ribosomal subunit protein uS2</fullName>
    </recommendedName>
    <alternativeName>
        <fullName evidence="3">40S ribosomal protein S0</fullName>
    </alternativeName>
</protein>
<sequence length="300" mass="32329">MAPSNLPAIFNPTQQDIEMLLAAQCHLGAKNLQVHMEPYLWKTRPDGVNVLNIGKTWEKIVLAARIIVAIDNPADICVISARPYGQRAVLKFASHTGATAIAGRFTPGNFTNYITRSFREPRLVIVTDPRTDAQAIKEASYVNIPVIALCDGDSPTEYVDVAIPTNNKGRHAIGLVWWMLAREVLRLRGTLANRETEWDVMTDLYFYRDPEAEENKDSAGVEEAKVPGADEVGPAAVADGFTSEWEVSGASAGAFTAQAAAAPGASWDADTTDWAASGEAQTGNEGWGTEAAAPAATTQW</sequence>
<name>RSSA_PYRTR</name>
<gene>
    <name type="primary">rps0</name>
    <name type="ORF">PTRG_02326</name>
</gene>
<dbReference type="EMBL" id="DS231616">
    <property type="protein sequence ID" value="EDU44849.1"/>
    <property type="molecule type" value="Genomic_DNA"/>
</dbReference>
<dbReference type="RefSeq" id="XP_001932659.1">
    <property type="nucleotide sequence ID" value="XM_001932624.1"/>
</dbReference>
<dbReference type="SMR" id="B2VY36"/>
<dbReference type="FunCoup" id="B2VY36">
    <property type="interactions" value="1217"/>
</dbReference>
<dbReference type="STRING" id="426418.B2VY36"/>
<dbReference type="EnsemblFungi" id="EDU44849">
    <property type="protein sequence ID" value="EDU44849"/>
    <property type="gene ID" value="PTRG_02326"/>
</dbReference>
<dbReference type="GeneID" id="6340598"/>
<dbReference type="KEGG" id="ptrr:6340598"/>
<dbReference type="eggNOG" id="KOG0830">
    <property type="taxonomic scope" value="Eukaryota"/>
</dbReference>
<dbReference type="HOGENOM" id="CLU_058171_0_1_1"/>
<dbReference type="InParanoid" id="B2VY36"/>
<dbReference type="OMA" id="QCHLGAK"/>
<dbReference type="OrthoDB" id="19710at28556"/>
<dbReference type="Proteomes" id="UP000001471">
    <property type="component" value="Unassembled WGS sequence"/>
</dbReference>
<dbReference type="GO" id="GO:0022627">
    <property type="term" value="C:cytosolic small ribosomal subunit"/>
    <property type="evidence" value="ECO:0007669"/>
    <property type="project" value="UniProtKB-UniRule"/>
</dbReference>
<dbReference type="GO" id="GO:0003735">
    <property type="term" value="F:structural constituent of ribosome"/>
    <property type="evidence" value="ECO:0007669"/>
    <property type="project" value="UniProtKB-UniRule"/>
</dbReference>
<dbReference type="GO" id="GO:0000028">
    <property type="term" value="P:ribosomal small subunit assembly"/>
    <property type="evidence" value="ECO:0007669"/>
    <property type="project" value="UniProtKB-UniRule"/>
</dbReference>
<dbReference type="GO" id="GO:0006412">
    <property type="term" value="P:translation"/>
    <property type="evidence" value="ECO:0007669"/>
    <property type="project" value="UniProtKB-UniRule"/>
</dbReference>
<dbReference type="FunFam" id="3.40.50.10490:FF:000010">
    <property type="entry name" value="40S ribosomal protein S0"/>
    <property type="match status" value="1"/>
</dbReference>
<dbReference type="Gene3D" id="3.40.50.10490">
    <property type="entry name" value="Glucose-6-phosphate isomerase like protein, domain 1"/>
    <property type="match status" value="1"/>
</dbReference>
<dbReference type="HAMAP" id="MF_03015">
    <property type="entry name" value="Ribosomal_S2_euk"/>
    <property type="match status" value="1"/>
</dbReference>
<dbReference type="InterPro" id="IPR001865">
    <property type="entry name" value="Ribosomal_uS2"/>
</dbReference>
<dbReference type="InterPro" id="IPR032281">
    <property type="entry name" value="Ribosomal_uS2_C"/>
</dbReference>
<dbReference type="InterPro" id="IPR018130">
    <property type="entry name" value="Ribosomal_uS2_CS"/>
</dbReference>
<dbReference type="InterPro" id="IPR027498">
    <property type="entry name" value="Ribosomal_uS2_euk"/>
</dbReference>
<dbReference type="InterPro" id="IPR005707">
    <property type="entry name" value="Ribosomal_uS2_euk/arc"/>
</dbReference>
<dbReference type="InterPro" id="IPR023591">
    <property type="entry name" value="Ribosomal_uS2_flav_dom_sf"/>
</dbReference>
<dbReference type="NCBIfam" id="TIGR01012">
    <property type="entry name" value="uS2_euk_arch"/>
    <property type="match status" value="1"/>
</dbReference>
<dbReference type="PANTHER" id="PTHR11489">
    <property type="entry name" value="40S RIBOSOMAL PROTEIN SA"/>
    <property type="match status" value="1"/>
</dbReference>
<dbReference type="Pfam" id="PF16122">
    <property type="entry name" value="40S_SA_C"/>
    <property type="match status" value="1"/>
</dbReference>
<dbReference type="Pfam" id="PF00318">
    <property type="entry name" value="Ribosomal_S2"/>
    <property type="match status" value="2"/>
</dbReference>
<dbReference type="PRINTS" id="PR00395">
    <property type="entry name" value="RIBOSOMALS2"/>
</dbReference>
<dbReference type="SUPFAM" id="SSF52313">
    <property type="entry name" value="Ribosomal protein S2"/>
    <property type="match status" value="1"/>
</dbReference>
<dbReference type="PROSITE" id="PS00963">
    <property type="entry name" value="RIBOSOMAL_S2_2"/>
    <property type="match status" value="1"/>
</dbReference>
<proteinExistence type="inferred from homology"/>
<reference key="1">
    <citation type="journal article" date="2013" name="G3 (Bethesda)">
        <title>Comparative genomics of a plant-pathogenic fungus, Pyrenophora tritici-repentis, reveals transduplication and the impact of repeat elements on pathogenicity and population divergence.</title>
        <authorList>
            <person name="Manning V.A."/>
            <person name="Pandelova I."/>
            <person name="Dhillon B."/>
            <person name="Wilhelm L.J."/>
            <person name="Goodwin S.B."/>
            <person name="Berlin A.M."/>
            <person name="Figueroa M."/>
            <person name="Freitag M."/>
            <person name="Hane J.K."/>
            <person name="Henrissat B."/>
            <person name="Holman W.H."/>
            <person name="Kodira C.D."/>
            <person name="Martin J."/>
            <person name="Oliver R.P."/>
            <person name="Robbertse B."/>
            <person name="Schackwitz W."/>
            <person name="Schwartz D.C."/>
            <person name="Spatafora J.W."/>
            <person name="Turgeon B.G."/>
            <person name="Yandava C."/>
            <person name="Young S."/>
            <person name="Zhou S."/>
            <person name="Zeng Q."/>
            <person name="Grigoriev I.V."/>
            <person name="Ma L.-J."/>
            <person name="Ciuffetti L.M."/>
        </authorList>
    </citation>
    <scope>NUCLEOTIDE SEQUENCE [LARGE SCALE GENOMIC DNA]</scope>
    <source>
        <strain>Pt-1C-BFP</strain>
    </source>
</reference>
<evidence type="ECO:0000255" key="1">
    <source>
        <dbReference type="HAMAP-Rule" id="MF_03015"/>
    </source>
</evidence>
<evidence type="ECO:0000256" key="2">
    <source>
        <dbReference type="SAM" id="MobiDB-lite"/>
    </source>
</evidence>
<evidence type="ECO:0000305" key="3"/>
<accession>B2VY36</accession>
<comment type="function">
    <text evidence="1">Required for the assembly and/or stability of the 40S ribosomal subunit. Required for the processing of the 20S rRNA-precursor to mature 18S rRNA in a late step of the maturation of 40S ribosomal subunits.</text>
</comment>
<comment type="subunit">
    <text evidence="1">Component of the small ribosomal subunit. Mature ribosomes consist of a small (40S) and a large (60S) subunit. The 40S subunit contains about 33 different proteins and 1 molecule of RNA (18S). The 60S subunit contains about 49 different proteins and 3 molecules of RNA (25S, 5.8S and 5S). Interacts with rps21.</text>
</comment>
<comment type="subcellular location">
    <subcellularLocation>
        <location evidence="1">Cytoplasm</location>
    </subcellularLocation>
</comment>
<comment type="similarity">
    <text evidence="1">Belongs to the universal ribosomal protein uS2 family.</text>
</comment>